<sequence>MHTPVLFEHPLNEKMRTWLRIEFLIQQMAFHPQIASHADALHFFRNAGDLLDVLERGEVRTDLVKELERQQRKLQSWAEVPGVDQERINELRHQLKQSSSTLMAAPRIGQFLREDRLIALVRQRLSIPGGCCSFDLPTLHIWLHMPQAHRDEQVASWLASLDPLVQSLSLILDLIRNSALFRKQTSLNGFYQDNGEDADLLRLRLDLAHQLYPQISGHKSRFAIRFLALDSEYGIVPERFDFELACC</sequence>
<protein>
    <recommendedName>
        <fullName evidence="1">Cell division protein ZapD</fullName>
    </recommendedName>
    <alternativeName>
        <fullName evidence="1">Z ring-associated protein D</fullName>
    </alternativeName>
</protein>
<evidence type="ECO:0000255" key="1">
    <source>
        <dbReference type="HAMAP-Rule" id="MF_01092"/>
    </source>
</evidence>
<feature type="chain" id="PRO_1000064914" description="Cell division protein ZapD">
    <location>
        <begin position="1"/>
        <end position="247"/>
    </location>
</feature>
<keyword id="KW-0131">Cell cycle</keyword>
<keyword id="KW-0132">Cell division</keyword>
<keyword id="KW-0963">Cytoplasm</keyword>
<keyword id="KW-0717">Septation</keyword>
<name>ZAPD_KLEP7</name>
<accession>A6T4P4</accession>
<comment type="function">
    <text evidence="1">Cell division factor that enhances FtsZ-ring assembly. Directly interacts with FtsZ and promotes bundling of FtsZ protofilaments, with a reduction in FtsZ GTPase activity.</text>
</comment>
<comment type="subunit">
    <text evidence="1">Interacts with FtsZ.</text>
</comment>
<comment type="subcellular location">
    <subcellularLocation>
        <location evidence="1">Cytoplasm</location>
    </subcellularLocation>
    <text evidence="1">Localizes to mid-cell in an FtsZ-dependent manner.</text>
</comment>
<comment type="similarity">
    <text evidence="1">Belongs to the ZapD family.</text>
</comment>
<organism>
    <name type="scientific">Klebsiella pneumoniae subsp. pneumoniae (strain ATCC 700721 / MGH 78578)</name>
    <dbReference type="NCBI Taxonomy" id="272620"/>
    <lineage>
        <taxon>Bacteria</taxon>
        <taxon>Pseudomonadati</taxon>
        <taxon>Pseudomonadota</taxon>
        <taxon>Gammaproteobacteria</taxon>
        <taxon>Enterobacterales</taxon>
        <taxon>Enterobacteriaceae</taxon>
        <taxon>Klebsiella/Raoultella group</taxon>
        <taxon>Klebsiella</taxon>
        <taxon>Klebsiella pneumoniae complex</taxon>
    </lineage>
</organism>
<proteinExistence type="inferred from homology"/>
<dbReference type="EMBL" id="CP000647">
    <property type="protein sequence ID" value="ABR75565.1"/>
    <property type="molecule type" value="Genomic_DNA"/>
</dbReference>
<dbReference type="RefSeq" id="WP_002888645.1">
    <property type="nucleotide sequence ID" value="NC_009648.1"/>
</dbReference>
<dbReference type="SMR" id="A6T4P4"/>
<dbReference type="STRING" id="272620.KPN_00105"/>
<dbReference type="jPOST" id="A6T4P4"/>
<dbReference type="PaxDb" id="272620-KPN_00105"/>
<dbReference type="EnsemblBacteria" id="ABR75565">
    <property type="protein sequence ID" value="ABR75565"/>
    <property type="gene ID" value="KPN_00105"/>
</dbReference>
<dbReference type="KEGG" id="kpn:KPN_00105"/>
<dbReference type="HOGENOM" id="CLU_076303_0_0_6"/>
<dbReference type="Proteomes" id="UP000000265">
    <property type="component" value="Chromosome"/>
</dbReference>
<dbReference type="GO" id="GO:0032153">
    <property type="term" value="C:cell division site"/>
    <property type="evidence" value="ECO:0007669"/>
    <property type="project" value="TreeGrafter"/>
</dbReference>
<dbReference type="GO" id="GO:0005737">
    <property type="term" value="C:cytoplasm"/>
    <property type="evidence" value="ECO:0007669"/>
    <property type="project" value="UniProtKB-SubCell"/>
</dbReference>
<dbReference type="GO" id="GO:0000917">
    <property type="term" value="P:division septum assembly"/>
    <property type="evidence" value="ECO:0007669"/>
    <property type="project" value="UniProtKB-KW"/>
</dbReference>
<dbReference type="GO" id="GO:0043093">
    <property type="term" value="P:FtsZ-dependent cytokinesis"/>
    <property type="evidence" value="ECO:0007669"/>
    <property type="project" value="UniProtKB-UniRule"/>
</dbReference>
<dbReference type="FunFam" id="1.10.3900.10:FF:000001">
    <property type="entry name" value="Cell division protein ZapD"/>
    <property type="match status" value="1"/>
</dbReference>
<dbReference type="FunFam" id="2.60.440.10:FF:000001">
    <property type="entry name" value="Cell division protein ZapD"/>
    <property type="match status" value="1"/>
</dbReference>
<dbReference type="Gene3D" id="1.10.3900.10">
    <property type="entry name" value="YacF-like"/>
    <property type="match status" value="1"/>
</dbReference>
<dbReference type="Gene3D" id="2.60.440.10">
    <property type="entry name" value="YacF-like domains"/>
    <property type="match status" value="1"/>
</dbReference>
<dbReference type="HAMAP" id="MF_01092">
    <property type="entry name" value="ZapD"/>
    <property type="match status" value="1"/>
</dbReference>
<dbReference type="InterPro" id="IPR009777">
    <property type="entry name" value="ZapD"/>
</dbReference>
<dbReference type="InterPro" id="IPR027462">
    <property type="entry name" value="ZapD_C"/>
</dbReference>
<dbReference type="InterPro" id="IPR036268">
    <property type="entry name" value="ZapD_sf"/>
</dbReference>
<dbReference type="NCBIfam" id="NF003653">
    <property type="entry name" value="PRK05287.1-1"/>
    <property type="match status" value="1"/>
</dbReference>
<dbReference type="NCBIfam" id="NF003655">
    <property type="entry name" value="PRK05287.1-3"/>
    <property type="match status" value="1"/>
</dbReference>
<dbReference type="PANTHER" id="PTHR39455">
    <property type="entry name" value="CELL DIVISION PROTEIN ZAPD"/>
    <property type="match status" value="1"/>
</dbReference>
<dbReference type="PANTHER" id="PTHR39455:SF1">
    <property type="entry name" value="CELL DIVISION PROTEIN ZAPD"/>
    <property type="match status" value="1"/>
</dbReference>
<dbReference type="Pfam" id="PF07072">
    <property type="entry name" value="ZapD"/>
    <property type="match status" value="1"/>
</dbReference>
<dbReference type="SUPFAM" id="SSF160950">
    <property type="entry name" value="YacF-like"/>
    <property type="match status" value="1"/>
</dbReference>
<gene>
    <name evidence="1" type="primary">zapD</name>
    <name type="ordered locus">KPN78578_01040</name>
    <name type="ORF">KPN_00105</name>
</gene>
<reference key="1">
    <citation type="submission" date="2006-09" db="EMBL/GenBank/DDBJ databases">
        <authorList>
            <consortium name="The Klebsiella pneumonia Genome Sequencing Project"/>
            <person name="McClelland M."/>
            <person name="Sanderson E.K."/>
            <person name="Spieth J."/>
            <person name="Clifton W.S."/>
            <person name="Latreille P."/>
            <person name="Sabo A."/>
            <person name="Pepin K."/>
            <person name="Bhonagiri V."/>
            <person name="Porwollik S."/>
            <person name="Ali J."/>
            <person name="Wilson R.K."/>
        </authorList>
    </citation>
    <scope>NUCLEOTIDE SEQUENCE [LARGE SCALE GENOMIC DNA]</scope>
    <source>
        <strain>ATCC 700721 / MGH 78578</strain>
    </source>
</reference>